<sequence>MTAKTLYDKLWEMHEVTRRDDGSSLIYIDRHILHEVTSPQAFEGLRLAGRNPWRIDANIATPDHNVPTTRAERQGGLESISDEVSRLQVQTLDENCDDFGILEFKMNDARQGIVHVVGPEQGATLPGMTVVCGDSHTSTHGAFGALAHGIGTSEVEHVLATQCLITKKMKNLQVRVEGTLPFGVTAKDIVLAVIGKIGTAGGNGHALEFAGSAIRALSMEGRMTICNMSIEAGARVGMVAVDEKTIAYVKGRPFAPKGADWDAAVALWSTLVSDPDAHFDTVVELHAEDIKPQVSWGTSPEMVLAIDQHVPDPATEQDPTKRNSIERALKYMGLKANQAITDIRLDRVFIGSCTNSRIEDLRAAAAVAKGRKVASTIKQALVVPGSGLVKAQAEAEGLDKVFLDAGFEWREPGCSMCLAMNPDKLGSGEHCASTSNRNFEGRQGAGGRTHLVSPAMAAAAAVSGHFVDVRELGDSGVGIRDS</sequence>
<feature type="chain" id="PRO_1000063632" description="3-isopropylmalate dehydratase large subunit">
    <location>
        <begin position="1"/>
        <end position="482"/>
    </location>
</feature>
<feature type="binding site" evidence="1">
    <location>
        <position position="353"/>
    </location>
    <ligand>
        <name>[4Fe-4S] cluster</name>
        <dbReference type="ChEBI" id="CHEBI:49883"/>
    </ligand>
</feature>
<feature type="binding site" evidence="1">
    <location>
        <position position="414"/>
    </location>
    <ligand>
        <name>[4Fe-4S] cluster</name>
        <dbReference type="ChEBI" id="CHEBI:49883"/>
    </ligand>
</feature>
<feature type="binding site" evidence="1">
    <location>
        <position position="417"/>
    </location>
    <ligand>
        <name>[4Fe-4S] cluster</name>
        <dbReference type="ChEBI" id="CHEBI:49883"/>
    </ligand>
</feature>
<reference key="1">
    <citation type="journal article" date="2005" name="Jpn. Agric. Res. Q.">
        <title>Genome sequence of Xanthomonas oryzae pv. oryzae suggests contribution of large numbers of effector genes and insertion sequences to its race diversity.</title>
        <authorList>
            <person name="Ochiai H."/>
            <person name="Inoue Y."/>
            <person name="Takeya M."/>
            <person name="Sasaki A."/>
            <person name="Kaku H."/>
        </authorList>
    </citation>
    <scope>NUCLEOTIDE SEQUENCE [LARGE SCALE GENOMIC DNA]</scope>
    <source>
        <strain>MAFF 311018</strain>
    </source>
</reference>
<evidence type="ECO:0000255" key="1">
    <source>
        <dbReference type="HAMAP-Rule" id="MF_01026"/>
    </source>
</evidence>
<keyword id="KW-0004">4Fe-4S</keyword>
<keyword id="KW-0028">Amino-acid biosynthesis</keyword>
<keyword id="KW-0100">Branched-chain amino acid biosynthesis</keyword>
<keyword id="KW-0408">Iron</keyword>
<keyword id="KW-0411">Iron-sulfur</keyword>
<keyword id="KW-0432">Leucine biosynthesis</keyword>
<keyword id="KW-0456">Lyase</keyword>
<keyword id="KW-0479">Metal-binding</keyword>
<protein>
    <recommendedName>
        <fullName evidence="1">3-isopropylmalate dehydratase large subunit</fullName>
        <ecNumber evidence="1">4.2.1.33</ecNumber>
    </recommendedName>
    <alternativeName>
        <fullName evidence="1">Alpha-IPM isomerase</fullName>
        <shortName evidence="1">IPMI</shortName>
    </alternativeName>
    <alternativeName>
        <fullName evidence="1">Isopropylmalate isomerase</fullName>
    </alternativeName>
</protein>
<dbReference type="EC" id="4.2.1.33" evidence="1"/>
<dbReference type="EMBL" id="AP008229">
    <property type="protein sequence ID" value="BAE67612.1"/>
    <property type="molecule type" value="Genomic_DNA"/>
</dbReference>
<dbReference type="RefSeq" id="WP_011257806.1">
    <property type="nucleotide sequence ID" value="NC_007705.1"/>
</dbReference>
<dbReference type="SMR" id="Q2P765"/>
<dbReference type="KEGG" id="xom:XOO0857"/>
<dbReference type="HOGENOM" id="CLU_006714_3_4_6"/>
<dbReference type="UniPathway" id="UPA00048">
    <property type="reaction ID" value="UER00071"/>
</dbReference>
<dbReference type="GO" id="GO:0003861">
    <property type="term" value="F:3-isopropylmalate dehydratase activity"/>
    <property type="evidence" value="ECO:0007669"/>
    <property type="project" value="UniProtKB-UniRule"/>
</dbReference>
<dbReference type="GO" id="GO:0051539">
    <property type="term" value="F:4 iron, 4 sulfur cluster binding"/>
    <property type="evidence" value="ECO:0007669"/>
    <property type="project" value="UniProtKB-KW"/>
</dbReference>
<dbReference type="GO" id="GO:0046872">
    <property type="term" value="F:metal ion binding"/>
    <property type="evidence" value="ECO:0007669"/>
    <property type="project" value="UniProtKB-KW"/>
</dbReference>
<dbReference type="GO" id="GO:0009098">
    <property type="term" value="P:L-leucine biosynthetic process"/>
    <property type="evidence" value="ECO:0007669"/>
    <property type="project" value="UniProtKB-UniRule"/>
</dbReference>
<dbReference type="CDD" id="cd01583">
    <property type="entry name" value="IPMI"/>
    <property type="match status" value="1"/>
</dbReference>
<dbReference type="FunFam" id="3.30.499.10:FF:000007">
    <property type="entry name" value="3-isopropylmalate dehydratase large subunit"/>
    <property type="match status" value="1"/>
</dbReference>
<dbReference type="Gene3D" id="3.30.499.10">
    <property type="entry name" value="Aconitase, domain 3"/>
    <property type="match status" value="2"/>
</dbReference>
<dbReference type="HAMAP" id="MF_01026">
    <property type="entry name" value="LeuC_type1"/>
    <property type="match status" value="1"/>
</dbReference>
<dbReference type="InterPro" id="IPR004430">
    <property type="entry name" value="3-IsopropMal_deHydase_lsu"/>
</dbReference>
<dbReference type="InterPro" id="IPR015931">
    <property type="entry name" value="Acnase/IPM_dHydase_lsu_aba_1/3"/>
</dbReference>
<dbReference type="InterPro" id="IPR001030">
    <property type="entry name" value="Acoase/IPM_deHydtase_lsu_aba"/>
</dbReference>
<dbReference type="InterPro" id="IPR018136">
    <property type="entry name" value="Aconitase_4Fe-4S_BS"/>
</dbReference>
<dbReference type="InterPro" id="IPR036008">
    <property type="entry name" value="Aconitase_4Fe-4S_dom"/>
</dbReference>
<dbReference type="InterPro" id="IPR050067">
    <property type="entry name" value="IPM_dehydratase_rel_enz"/>
</dbReference>
<dbReference type="InterPro" id="IPR033941">
    <property type="entry name" value="IPMI_cat"/>
</dbReference>
<dbReference type="NCBIfam" id="TIGR00170">
    <property type="entry name" value="leuC"/>
    <property type="match status" value="1"/>
</dbReference>
<dbReference type="NCBIfam" id="NF004016">
    <property type="entry name" value="PRK05478.1"/>
    <property type="match status" value="1"/>
</dbReference>
<dbReference type="NCBIfam" id="NF009116">
    <property type="entry name" value="PRK12466.1"/>
    <property type="match status" value="1"/>
</dbReference>
<dbReference type="PANTHER" id="PTHR43822:SF9">
    <property type="entry name" value="3-ISOPROPYLMALATE DEHYDRATASE"/>
    <property type="match status" value="1"/>
</dbReference>
<dbReference type="PANTHER" id="PTHR43822">
    <property type="entry name" value="HOMOACONITASE, MITOCHONDRIAL-RELATED"/>
    <property type="match status" value="1"/>
</dbReference>
<dbReference type="Pfam" id="PF00330">
    <property type="entry name" value="Aconitase"/>
    <property type="match status" value="1"/>
</dbReference>
<dbReference type="PRINTS" id="PR00415">
    <property type="entry name" value="ACONITASE"/>
</dbReference>
<dbReference type="SUPFAM" id="SSF53732">
    <property type="entry name" value="Aconitase iron-sulfur domain"/>
    <property type="match status" value="1"/>
</dbReference>
<dbReference type="PROSITE" id="PS00450">
    <property type="entry name" value="ACONITASE_1"/>
    <property type="match status" value="1"/>
</dbReference>
<dbReference type="PROSITE" id="PS01244">
    <property type="entry name" value="ACONITASE_2"/>
    <property type="match status" value="1"/>
</dbReference>
<name>LEUC_XANOM</name>
<comment type="function">
    <text evidence="1">Catalyzes the isomerization between 2-isopropylmalate and 3-isopropylmalate, via the formation of 2-isopropylmaleate.</text>
</comment>
<comment type="catalytic activity">
    <reaction evidence="1">
        <text>(2R,3S)-3-isopropylmalate = (2S)-2-isopropylmalate</text>
        <dbReference type="Rhea" id="RHEA:32287"/>
        <dbReference type="ChEBI" id="CHEBI:1178"/>
        <dbReference type="ChEBI" id="CHEBI:35121"/>
        <dbReference type="EC" id="4.2.1.33"/>
    </reaction>
</comment>
<comment type="cofactor">
    <cofactor evidence="1">
        <name>[4Fe-4S] cluster</name>
        <dbReference type="ChEBI" id="CHEBI:49883"/>
    </cofactor>
    <text evidence="1">Binds 1 [4Fe-4S] cluster per subunit.</text>
</comment>
<comment type="pathway">
    <text evidence="1">Amino-acid biosynthesis; L-leucine biosynthesis; L-leucine from 3-methyl-2-oxobutanoate: step 2/4.</text>
</comment>
<comment type="subunit">
    <text evidence="1">Heterodimer of LeuC and LeuD.</text>
</comment>
<comment type="similarity">
    <text evidence="1">Belongs to the aconitase/IPM isomerase family. LeuC type 1 subfamily.</text>
</comment>
<gene>
    <name evidence="1" type="primary">leuC</name>
    <name type="ordered locus">XOO0857</name>
</gene>
<organism>
    <name type="scientific">Xanthomonas oryzae pv. oryzae (strain MAFF 311018)</name>
    <dbReference type="NCBI Taxonomy" id="342109"/>
    <lineage>
        <taxon>Bacteria</taxon>
        <taxon>Pseudomonadati</taxon>
        <taxon>Pseudomonadota</taxon>
        <taxon>Gammaproteobacteria</taxon>
        <taxon>Lysobacterales</taxon>
        <taxon>Lysobacteraceae</taxon>
        <taxon>Xanthomonas</taxon>
    </lineage>
</organism>
<accession>Q2P765</accession>
<proteinExistence type="inferred from homology"/>